<accession>P39244</accession>
<gene>
    <name type="primary">y16L</name>
    <name type="synonym">ndd.2</name>
</gene>
<reference key="1">
    <citation type="journal article" date="2003" name="Microbiol. Mol. Biol. Rev.">
        <title>Bacteriophage T4 genome.</title>
        <authorList>
            <person name="Miller E.S."/>
            <person name="Kutter E."/>
            <person name="Mosig G."/>
            <person name="Arisaka F."/>
            <person name="Kunisawa T."/>
            <person name="Ruger W."/>
        </authorList>
    </citation>
    <scope>NUCLEOTIDE SEQUENCE [LARGE SCALE GENOMIC DNA]</scope>
</reference>
<organism>
    <name type="scientific">Enterobacteria phage T4</name>
    <name type="common">Bacteriophage T4</name>
    <dbReference type="NCBI Taxonomy" id="10665"/>
    <lineage>
        <taxon>Viruses</taxon>
        <taxon>Duplodnaviria</taxon>
        <taxon>Heunggongvirae</taxon>
        <taxon>Uroviricota</taxon>
        <taxon>Caudoviricetes</taxon>
        <taxon>Straboviridae</taxon>
        <taxon>Tevenvirinae</taxon>
        <taxon>Tequatrovirus</taxon>
    </lineage>
</organism>
<dbReference type="EMBL" id="AF158101">
    <property type="protein sequence ID" value="AAD42617.1"/>
    <property type="molecule type" value="Genomic_DNA"/>
</dbReference>
<dbReference type="RefSeq" id="NP_049881.1">
    <property type="nucleotide sequence ID" value="NC_000866.4"/>
</dbReference>
<dbReference type="GeneID" id="1258762"/>
<dbReference type="KEGG" id="vg:1258762"/>
<dbReference type="OrthoDB" id="28068at10239"/>
<dbReference type="Proteomes" id="UP000009087">
    <property type="component" value="Segment"/>
</dbReference>
<proteinExistence type="predicted"/>
<organismHost>
    <name type="scientific">Escherichia coli</name>
    <dbReference type="NCBI Taxonomy" id="562"/>
</organismHost>
<keyword id="KW-1185">Reference proteome</keyword>
<feature type="chain" id="PRO_0000165208" description="Uncharacterized 4.4 kDa protein in ndd-denB intergenic region">
    <location>
        <begin position="1"/>
        <end position="36"/>
    </location>
</feature>
<protein>
    <recommendedName>
        <fullName>Uncharacterized 4.4 kDa protein in ndd-denB intergenic region</fullName>
    </recommendedName>
</protein>
<name>Y16L_BPT4</name>
<sequence>MMNLLSGWFYILMFYIGVNFPYWMGWSTTAFGFYTP</sequence>